<keyword id="KW-0488">Methylation</keyword>
<keyword id="KW-1185">Reference proteome</keyword>
<keyword id="KW-0687">Ribonucleoprotein</keyword>
<keyword id="KW-0689">Ribosomal protein</keyword>
<keyword id="KW-0694">RNA-binding</keyword>
<keyword id="KW-0699">rRNA-binding</keyword>
<gene>
    <name evidence="1" type="primary">rplC</name>
    <name type="ordered locus">CBU_0238</name>
</gene>
<sequence>MSIGLIGRKCGMTRIFTETGSSIPVTVVEVILNRITQVKTVETDGYRAFQVAYGKKSSARVNKPLAGHYSKAAVEAGNALREFRLGNEELTEAKAGDELKVDIFKEGQVVDVRGLTRGKGFAGTVKRHNFRTQDATHGNSLSHRAPGSIGQCQTPGRVWKGKKMAGQLGNVYCTVQSQEIIKVDVERNLLLIKGALPGAPGGEVIITQSSKKRKEDK</sequence>
<feature type="chain" id="PRO_0000077096" description="Large ribosomal subunit protein uL3">
    <location>
        <begin position="1"/>
        <end position="217"/>
    </location>
</feature>
<feature type="region of interest" description="Disordered" evidence="2">
    <location>
        <begin position="135"/>
        <end position="154"/>
    </location>
</feature>
<feature type="modified residue" description="N5-methylglutamine" evidence="1">
    <location>
        <position position="153"/>
    </location>
</feature>
<name>RL3_COXBU</name>
<organism>
    <name type="scientific">Coxiella burnetii (strain RSA 493 / Nine Mile phase I)</name>
    <dbReference type="NCBI Taxonomy" id="227377"/>
    <lineage>
        <taxon>Bacteria</taxon>
        <taxon>Pseudomonadati</taxon>
        <taxon>Pseudomonadota</taxon>
        <taxon>Gammaproteobacteria</taxon>
        <taxon>Legionellales</taxon>
        <taxon>Coxiellaceae</taxon>
        <taxon>Coxiella</taxon>
    </lineage>
</organism>
<comment type="function">
    <text evidence="1">One of the primary rRNA binding proteins, it binds directly near the 3'-end of the 23S rRNA, where it nucleates assembly of the 50S subunit.</text>
</comment>
<comment type="subunit">
    <text evidence="1">Part of the 50S ribosomal subunit. Forms a cluster with proteins L14 and L19.</text>
</comment>
<comment type="PTM">
    <text evidence="1">Methylated by PrmB.</text>
</comment>
<comment type="similarity">
    <text evidence="1">Belongs to the universal ribosomal protein uL3 family.</text>
</comment>
<accession>Q83ES4</accession>
<protein>
    <recommendedName>
        <fullName evidence="1">Large ribosomal subunit protein uL3</fullName>
    </recommendedName>
    <alternativeName>
        <fullName evidence="3">50S ribosomal protein L3</fullName>
    </alternativeName>
</protein>
<reference key="1">
    <citation type="journal article" date="2003" name="Proc. Natl. Acad. Sci. U.S.A.">
        <title>Complete genome sequence of the Q-fever pathogen, Coxiella burnetii.</title>
        <authorList>
            <person name="Seshadri R."/>
            <person name="Paulsen I.T."/>
            <person name="Eisen J.A."/>
            <person name="Read T.D."/>
            <person name="Nelson K.E."/>
            <person name="Nelson W.C."/>
            <person name="Ward N.L."/>
            <person name="Tettelin H."/>
            <person name="Davidsen T.M."/>
            <person name="Beanan M.J."/>
            <person name="DeBoy R.T."/>
            <person name="Daugherty S.C."/>
            <person name="Brinkac L.M."/>
            <person name="Madupu R."/>
            <person name="Dodson R.J."/>
            <person name="Khouri H.M."/>
            <person name="Lee K.H."/>
            <person name="Carty H.A."/>
            <person name="Scanlan D."/>
            <person name="Heinzen R.A."/>
            <person name="Thompson H.A."/>
            <person name="Samuel J.E."/>
            <person name="Fraser C.M."/>
            <person name="Heidelberg J.F."/>
        </authorList>
    </citation>
    <scope>NUCLEOTIDE SEQUENCE [LARGE SCALE GENOMIC DNA]</scope>
    <source>
        <strain>RSA 493 / Nine Mile phase I</strain>
    </source>
</reference>
<evidence type="ECO:0000255" key="1">
    <source>
        <dbReference type="HAMAP-Rule" id="MF_01325"/>
    </source>
</evidence>
<evidence type="ECO:0000256" key="2">
    <source>
        <dbReference type="SAM" id="MobiDB-lite"/>
    </source>
</evidence>
<evidence type="ECO:0000305" key="3"/>
<proteinExistence type="inferred from homology"/>
<dbReference type="EMBL" id="AE016828">
    <property type="protein sequence ID" value="AAO89796.1"/>
    <property type="molecule type" value="Genomic_DNA"/>
</dbReference>
<dbReference type="RefSeq" id="NP_819282.1">
    <property type="nucleotide sequence ID" value="NC_002971.4"/>
</dbReference>
<dbReference type="RefSeq" id="WP_010957453.1">
    <property type="nucleotide sequence ID" value="NZ_CCYB01000060.1"/>
</dbReference>
<dbReference type="SMR" id="Q83ES4"/>
<dbReference type="STRING" id="227377.CBU_0238"/>
<dbReference type="EnsemblBacteria" id="AAO89796">
    <property type="protein sequence ID" value="AAO89796"/>
    <property type="gene ID" value="CBU_0238"/>
</dbReference>
<dbReference type="GeneID" id="1208119"/>
<dbReference type="KEGG" id="cbu:CBU_0238"/>
<dbReference type="PATRIC" id="fig|227377.7.peg.233"/>
<dbReference type="eggNOG" id="COG0087">
    <property type="taxonomic scope" value="Bacteria"/>
</dbReference>
<dbReference type="HOGENOM" id="CLU_044142_4_1_6"/>
<dbReference type="OrthoDB" id="9806135at2"/>
<dbReference type="Proteomes" id="UP000002671">
    <property type="component" value="Chromosome"/>
</dbReference>
<dbReference type="GO" id="GO:0022625">
    <property type="term" value="C:cytosolic large ribosomal subunit"/>
    <property type="evidence" value="ECO:0000318"/>
    <property type="project" value="GO_Central"/>
</dbReference>
<dbReference type="GO" id="GO:0019843">
    <property type="term" value="F:rRNA binding"/>
    <property type="evidence" value="ECO:0007669"/>
    <property type="project" value="UniProtKB-UniRule"/>
</dbReference>
<dbReference type="GO" id="GO:0003735">
    <property type="term" value="F:structural constituent of ribosome"/>
    <property type="evidence" value="ECO:0000318"/>
    <property type="project" value="GO_Central"/>
</dbReference>
<dbReference type="GO" id="GO:0006412">
    <property type="term" value="P:translation"/>
    <property type="evidence" value="ECO:0007669"/>
    <property type="project" value="UniProtKB-UniRule"/>
</dbReference>
<dbReference type="FunFam" id="2.40.30.10:FF:000004">
    <property type="entry name" value="50S ribosomal protein L3"/>
    <property type="match status" value="1"/>
</dbReference>
<dbReference type="FunFam" id="3.30.160.810:FF:000001">
    <property type="entry name" value="50S ribosomal protein L3"/>
    <property type="match status" value="1"/>
</dbReference>
<dbReference type="Gene3D" id="3.30.160.810">
    <property type="match status" value="1"/>
</dbReference>
<dbReference type="Gene3D" id="2.40.30.10">
    <property type="entry name" value="Translation factors"/>
    <property type="match status" value="1"/>
</dbReference>
<dbReference type="HAMAP" id="MF_01325_B">
    <property type="entry name" value="Ribosomal_uL3_B"/>
    <property type="match status" value="1"/>
</dbReference>
<dbReference type="InterPro" id="IPR000597">
    <property type="entry name" value="Ribosomal_uL3"/>
</dbReference>
<dbReference type="InterPro" id="IPR019927">
    <property type="entry name" value="Ribosomal_uL3_bac/org-type"/>
</dbReference>
<dbReference type="InterPro" id="IPR019926">
    <property type="entry name" value="Ribosomal_uL3_CS"/>
</dbReference>
<dbReference type="InterPro" id="IPR009000">
    <property type="entry name" value="Transl_B-barrel_sf"/>
</dbReference>
<dbReference type="NCBIfam" id="TIGR03625">
    <property type="entry name" value="L3_bact"/>
    <property type="match status" value="1"/>
</dbReference>
<dbReference type="PANTHER" id="PTHR11229">
    <property type="entry name" value="50S RIBOSOMAL PROTEIN L3"/>
    <property type="match status" value="1"/>
</dbReference>
<dbReference type="PANTHER" id="PTHR11229:SF16">
    <property type="entry name" value="LARGE RIBOSOMAL SUBUNIT PROTEIN UL3C"/>
    <property type="match status" value="1"/>
</dbReference>
<dbReference type="Pfam" id="PF00297">
    <property type="entry name" value="Ribosomal_L3"/>
    <property type="match status" value="1"/>
</dbReference>
<dbReference type="SUPFAM" id="SSF50447">
    <property type="entry name" value="Translation proteins"/>
    <property type="match status" value="1"/>
</dbReference>
<dbReference type="PROSITE" id="PS00474">
    <property type="entry name" value="RIBOSOMAL_L3"/>
    <property type="match status" value="1"/>
</dbReference>